<proteinExistence type="inferred from homology"/>
<protein>
    <recommendedName>
        <fullName evidence="1">Large ribosomal subunit protein uL15</fullName>
    </recommendedName>
    <alternativeName>
        <fullName evidence="3">50S ribosomal protein L15</fullName>
    </alternativeName>
</protein>
<reference key="1">
    <citation type="journal article" date="2011" name="Stand. Genomic Sci.">
        <title>Complete genome sequence of 'Thioalkalivibrio sulfidophilus' HL-EbGr7.</title>
        <authorList>
            <person name="Muyzer G."/>
            <person name="Sorokin D.Y."/>
            <person name="Mavromatis K."/>
            <person name="Lapidus A."/>
            <person name="Clum A."/>
            <person name="Ivanova N."/>
            <person name="Pati A."/>
            <person name="d'Haeseleer P."/>
            <person name="Woyke T."/>
            <person name="Kyrpides N.C."/>
        </authorList>
    </citation>
    <scope>NUCLEOTIDE SEQUENCE [LARGE SCALE GENOMIC DNA]</scope>
    <source>
        <strain>HL-EbGR7</strain>
    </source>
</reference>
<name>RL15_THISH</name>
<gene>
    <name evidence="1" type="primary">rplO</name>
    <name type="ordered locus">Tgr7_2305</name>
</gene>
<keyword id="KW-1185">Reference proteome</keyword>
<keyword id="KW-0687">Ribonucleoprotein</keyword>
<keyword id="KW-0689">Ribosomal protein</keyword>
<keyword id="KW-0694">RNA-binding</keyword>
<keyword id="KW-0699">rRNA-binding</keyword>
<feature type="chain" id="PRO_1000166323" description="Large ribosomal subunit protein uL15">
    <location>
        <begin position="1"/>
        <end position="143"/>
    </location>
</feature>
<feature type="region of interest" description="Disordered" evidence="2">
    <location>
        <begin position="1"/>
        <end position="51"/>
    </location>
</feature>
<feature type="compositionally biased region" description="Gly residues" evidence="2">
    <location>
        <begin position="21"/>
        <end position="31"/>
    </location>
</feature>
<comment type="function">
    <text evidence="1">Binds to the 23S rRNA.</text>
</comment>
<comment type="subunit">
    <text evidence="1">Part of the 50S ribosomal subunit.</text>
</comment>
<comment type="similarity">
    <text evidence="1">Belongs to the universal ribosomal protein uL15 family.</text>
</comment>
<accession>B8GV39</accession>
<dbReference type="EMBL" id="CP001339">
    <property type="protein sequence ID" value="ACL73385.1"/>
    <property type="molecule type" value="Genomic_DNA"/>
</dbReference>
<dbReference type="RefSeq" id="WP_012638861.1">
    <property type="nucleotide sequence ID" value="NC_011901.1"/>
</dbReference>
<dbReference type="SMR" id="B8GV39"/>
<dbReference type="STRING" id="396588.Tgr7_2305"/>
<dbReference type="KEGG" id="tgr:Tgr7_2305"/>
<dbReference type="eggNOG" id="COG0200">
    <property type="taxonomic scope" value="Bacteria"/>
</dbReference>
<dbReference type="HOGENOM" id="CLU_055188_4_2_6"/>
<dbReference type="OrthoDB" id="9810293at2"/>
<dbReference type="Proteomes" id="UP000002383">
    <property type="component" value="Chromosome"/>
</dbReference>
<dbReference type="GO" id="GO:0022625">
    <property type="term" value="C:cytosolic large ribosomal subunit"/>
    <property type="evidence" value="ECO:0007669"/>
    <property type="project" value="TreeGrafter"/>
</dbReference>
<dbReference type="GO" id="GO:0019843">
    <property type="term" value="F:rRNA binding"/>
    <property type="evidence" value="ECO:0007669"/>
    <property type="project" value="UniProtKB-UniRule"/>
</dbReference>
<dbReference type="GO" id="GO:0003735">
    <property type="term" value="F:structural constituent of ribosome"/>
    <property type="evidence" value="ECO:0007669"/>
    <property type="project" value="InterPro"/>
</dbReference>
<dbReference type="GO" id="GO:0006412">
    <property type="term" value="P:translation"/>
    <property type="evidence" value="ECO:0007669"/>
    <property type="project" value="UniProtKB-UniRule"/>
</dbReference>
<dbReference type="Gene3D" id="3.100.10.10">
    <property type="match status" value="1"/>
</dbReference>
<dbReference type="HAMAP" id="MF_01341">
    <property type="entry name" value="Ribosomal_uL15"/>
    <property type="match status" value="1"/>
</dbReference>
<dbReference type="InterPro" id="IPR030878">
    <property type="entry name" value="Ribosomal_uL15"/>
</dbReference>
<dbReference type="InterPro" id="IPR021131">
    <property type="entry name" value="Ribosomal_uL15/eL18"/>
</dbReference>
<dbReference type="InterPro" id="IPR036227">
    <property type="entry name" value="Ribosomal_uL15/eL18_sf"/>
</dbReference>
<dbReference type="InterPro" id="IPR005749">
    <property type="entry name" value="Ribosomal_uL15_bac-type"/>
</dbReference>
<dbReference type="InterPro" id="IPR001196">
    <property type="entry name" value="Ribosomal_uL15_CS"/>
</dbReference>
<dbReference type="NCBIfam" id="TIGR01071">
    <property type="entry name" value="rplO_bact"/>
    <property type="match status" value="1"/>
</dbReference>
<dbReference type="PANTHER" id="PTHR12934">
    <property type="entry name" value="50S RIBOSOMAL PROTEIN L15"/>
    <property type="match status" value="1"/>
</dbReference>
<dbReference type="PANTHER" id="PTHR12934:SF11">
    <property type="entry name" value="LARGE RIBOSOMAL SUBUNIT PROTEIN UL15M"/>
    <property type="match status" value="1"/>
</dbReference>
<dbReference type="Pfam" id="PF00828">
    <property type="entry name" value="Ribosomal_L27A"/>
    <property type="match status" value="1"/>
</dbReference>
<dbReference type="SUPFAM" id="SSF52080">
    <property type="entry name" value="Ribosomal proteins L15p and L18e"/>
    <property type="match status" value="1"/>
</dbReference>
<dbReference type="PROSITE" id="PS00475">
    <property type="entry name" value="RIBOSOMAL_L15"/>
    <property type="match status" value="1"/>
</dbReference>
<sequence length="143" mass="14807">MRLNSIAPAPGSRPSAKRVGRGIGSGLGKTAGRGHKGQKARAGGYHKVGFEGGQMPLQRRLPKVGFNSRKSLRVAEVRLHELAGLEGTIDLAALIKASVVPAQTLRAKVIASGKLEKAVTLKGVAVTKGAREAIEAAGGKIEE</sequence>
<evidence type="ECO:0000255" key="1">
    <source>
        <dbReference type="HAMAP-Rule" id="MF_01341"/>
    </source>
</evidence>
<evidence type="ECO:0000256" key="2">
    <source>
        <dbReference type="SAM" id="MobiDB-lite"/>
    </source>
</evidence>
<evidence type="ECO:0000305" key="3"/>
<organism>
    <name type="scientific">Thioalkalivibrio sulfidiphilus (strain HL-EbGR7)</name>
    <dbReference type="NCBI Taxonomy" id="396588"/>
    <lineage>
        <taxon>Bacteria</taxon>
        <taxon>Pseudomonadati</taxon>
        <taxon>Pseudomonadota</taxon>
        <taxon>Gammaproteobacteria</taxon>
        <taxon>Chromatiales</taxon>
        <taxon>Ectothiorhodospiraceae</taxon>
        <taxon>Thioalkalivibrio</taxon>
    </lineage>
</organism>